<evidence type="ECO:0000255" key="1">
    <source>
        <dbReference type="HAMAP-Rule" id="MF_00076"/>
    </source>
</evidence>
<dbReference type="EC" id="4.2.1.19" evidence="1"/>
<dbReference type="EMBL" id="CP000359">
    <property type="protein sequence ID" value="ABF45279.1"/>
    <property type="molecule type" value="Genomic_DNA"/>
</dbReference>
<dbReference type="SMR" id="Q1IZQ5"/>
<dbReference type="STRING" id="319795.Dgeo_0979"/>
<dbReference type="KEGG" id="dge:Dgeo_0979"/>
<dbReference type="eggNOG" id="COG0131">
    <property type="taxonomic scope" value="Bacteria"/>
</dbReference>
<dbReference type="HOGENOM" id="CLU_044308_3_0_0"/>
<dbReference type="UniPathway" id="UPA00031">
    <property type="reaction ID" value="UER00011"/>
</dbReference>
<dbReference type="Proteomes" id="UP000002431">
    <property type="component" value="Chromosome"/>
</dbReference>
<dbReference type="GO" id="GO:0005737">
    <property type="term" value="C:cytoplasm"/>
    <property type="evidence" value="ECO:0007669"/>
    <property type="project" value="UniProtKB-SubCell"/>
</dbReference>
<dbReference type="GO" id="GO:0004424">
    <property type="term" value="F:imidazoleglycerol-phosphate dehydratase activity"/>
    <property type="evidence" value="ECO:0007669"/>
    <property type="project" value="UniProtKB-UniRule"/>
</dbReference>
<dbReference type="GO" id="GO:0000105">
    <property type="term" value="P:L-histidine biosynthetic process"/>
    <property type="evidence" value="ECO:0007669"/>
    <property type="project" value="UniProtKB-UniRule"/>
</dbReference>
<dbReference type="CDD" id="cd07914">
    <property type="entry name" value="IGPD"/>
    <property type="match status" value="1"/>
</dbReference>
<dbReference type="FunFam" id="3.30.230.40:FF:000001">
    <property type="entry name" value="Imidazoleglycerol-phosphate dehydratase HisB"/>
    <property type="match status" value="1"/>
</dbReference>
<dbReference type="FunFam" id="3.30.230.40:FF:000003">
    <property type="entry name" value="Imidazoleglycerol-phosphate dehydratase HisB"/>
    <property type="match status" value="1"/>
</dbReference>
<dbReference type="Gene3D" id="3.30.230.40">
    <property type="entry name" value="Imidazole glycerol phosphate dehydratase, domain 1"/>
    <property type="match status" value="2"/>
</dbReference>
<dbReference type="HAMAP" id="MF_00076">
    <property type="entry name" value="HisB"/>
    <property type="match status" value="1"/>
</dbReference>
<dbReference type="InterPro" id="IPR038494">
    <property type="entry name" value="IGPD_sf"/>
</dbReference>
<dbReference type="InterPro" id="IPR000807">
    <property type="entry name" value="ImidazoleglycerolP_deHydtase"/>
</dbReference>
<dbReference type="InterPro" id="IPR020565">
    <property type="entry name" value="ImidazoleglycerP_deHydtase_CS"/>
</dbReference>
<dbReference type="InterPro" id="IPR020568">
    <property type="entry name" value="Ribosomal_Su5_D2-typ_SF"/>
</dbReference>
<dbReference type="NCBIfam" id="NF002111">
    <property type="entry name" value="PRK00951.2-1"/>
    <property type="match status" value="1"/>
</dbReference>
<dbReference type="NCBIfam" id="NF002114">
    <property type="entry name" value="PRK00951.2-4"/>
    <property type="match status" value="1"/>
</dbReference>
<dbReference type="PANTHER" id="PTHR23133:SF2">
    <property type="entry name" value="IMIDAZOLEGLYCEROL-PHOSPHATE DEHYDRATASE"/>
    <property type="match status" value="1"/>
</dbReference>
<dbReference type="PANTHER" id="PTHR23133">
    <property type="entry name" value="IMIDAZOLEGLYCEROL-PHOSPHATE DEHYDRATASE HIS7"/>
    <property type="match status" value="1"/>
</dbReference>
<dbReference type="Pfam" id="PF00475">
    <property type="entry name" value="IGPD"/>
    <property type="match status" value="1"/>
</dbReference>
<dbReference type="SUPFAM" id="SSF54211">
    <property type="entry name" value="Ribosomal protein S5 domain 2-like"/>
    <property type="match status" value="2"/>
</dbReference>
<dbReference type="PROSITE" id="PS00954">
    <property type="entry name" value="IGP_DEHYDRATASE_1"/>
    <property type="match status" value="1"/>
</dbReference>
<dbReference type="PROSITE" id="PS00955">
    <property type="entry name" value="IGP_DEHYDRATASE_2"/>
    <property type="match status" value="1"/>
</dbReference>
<gene>
    <name evidence="1" type="primary">hisB</name>
    <name type="ordered locus">Dgeo_0979</name>
</gene>
<feature type="chain" id="PRO_0000336309" description="Imidazoleglycerol-phosphate dehydratase">
    <location>
        <begin position="1"/>
        <end position="203"/>
    </location>
</feature>
<comment type="catalytic activity">
    <reaction evidence="1">
        <text>D-erythro-1-(imidazol-4-yl)glycerol 3-phosphate = 3-(imidazol-4-yl)-2-oxopropyl phosphate + H2O</text>
        <dbReference type="Rhea" id="RHEA:11040"/>
        <dbReference type="ChEBI" id="CHEBI:15377"/>
        <dbReference type="ChEBI" id="CHEBI:57766"/>
        <dbReference type="ChEBI" id="CHEBI:58278"/>
        <dbReference type="EC" id="4.2.1.19"/>
    </reaction>
</comment>
<comment type="pathway">
    <text evidence="1">Amino-acid biosynthesis; L-histidine biosynthesis; L-histidine from 5-phospho-alpha-D-ribose 1-diphosphate: step 6/9.</text>
</comment>
<comment type="subcellular location">
    <subcellularLocation>
        <location evidence="1">Cytoplasm</location>
    </subcellularLocation>
</comment>
<comment type="similarity">
    <text evidence="1">Belongs to the imidazoleglycerol-phosphate dehydratase family.</text>
</comment>
<proteinExistence type="inferred from homology"/>
<organism>
    <name type="scientific">Deinococcus geothermalis (strain DSM 11300 / CIP 105573 / AG-3a)</name>
    <dbReference type="NCBI Taxonomy" id="319795"/>
    <lineage>
        <taxon>Bacteria</taxon>
        <taxon>Thermotogati</taxon>
        <taxon>Deinococcota</taxon>
        <taxon>Deinococci</taxon>
        <taxon>Deinococcales</taxon>
        <taxon>Deinococcaceae</taxon>
        <taxon>Deinococcus</taxon>
    </lineage>
</organism>
<name>HIS7_DEIGD</name>
<protein>
    <recommendedName>
        <fullName evidence="1">Imidazoleglycerol-phosphate dehydratase</fullName>
        <shortName evidence="1">IGPD</shortName>
        <ecNumber evidence="1">4.2.1.19</ecNumber>
    </recommendedName>
</protein>
<sequence length="203" mass="22243">MRLMARTATNRTATVRRTTKETDITVTLDLDSPVSTPPTTGHGFLDHMLDALARHGRLGLSVRATGDLHIEPHHLIEDVGITLGQALNQALGGRRGIERYGSAFVPMDETLAHVVLDLSGRAHLAFEPERLDVWGDAGGMTHYHLREFLRGFCNHAGVTLHVRLLAGREAHHVIEAMVKAFARALRDAVRVTSEELASTKGLL</sequence>
<accession>Q1IZQ5</accession>
<keyword id="KW-0028">Amino-acid biosynthesis</keyword>
<keyword id="KW-0963">Cytoplasm</keyword>
<keyword id="KW-0368">Histidine biosynthesis</keyword>
<keyword id="KW-0456">Lyase</keyword>
<reference key="1">
    <citation type="submission" date="2006-04" db="EMBL/GenBank/DDBJ databases">
        <title>Complete sequence of chromosome of Deinococcus geothermalis DSM 11300.</title>
        <authorList>
            <person name="Copeland A."/>
            <person name="Lucas S."/>
            <person name="Lapidus A."/>
            <person name="Barry K."/>
            <person name="Detter J.C."/>
            <person name="Glavina del Rio T."/>
            <person name="Hammon N."/>
            <person name="Israni S."/>
            <person name="Dalin E."/>
            <person name="Tice H."/>
            <person name="Pitluck S."/>
            <person name="Brettin T."/>
            <person name="Bruce D."/>
            <person name="Han C."/>
            <person name="Tapia R."/>
            <person name="Saunders E."/>
            <person name="Gilna P."/>
            <person name="Schmutz J."/>
            <person name="Larimer F."/>
            <person name="Land M."/>
            <person name="Hauser L."/>
            <person name="Kyrpides N."/>
            <person name="Kim E."/>
            <person name="Daly M.J."/>
            <person name="Fredrickson J.K."/>
            <person name="Makarova K.S."/>
            <person name="Gaidamakova E.K."/>
            <person name="Zhai M."/>
            <person name="Richardson P."/>
        </authorList>
    </citation>
    <scope>NUCLEOTIDE SEQUENCE [LARGE SCALE GENOMIC DNA]</scope>
    <source>
        <strain>DSM 11300 / CIP 105573 / AG-3a</strain>
    </source>
</reference>